<gene>
    <name evidence="1" type="primary">atpB</name>
    <name type="ordered locus">SAR11_0116</name>
</gene>
<accession>Q4FPE9</accession>
<keyword id="KW-0066">ATP synthesis</keyword>
<keyword id="KW-0997">Cell inner membrane</keyword>
<keyword id="KW-1003">Cell membrane</keyword>
<keyword id="KW-0138">CF(0)</keyword>
<keyword id="KW-0375">Hydrogen ion transport</keyword>
<keyword id="KW-0406">Ion transport</keyword>
<keyword id="KW-0472">Membrane</keyword>
<keyword id="KW-1185">Reference proteome</keyword>
<keyword id="KW-0812">Transmembrane</keyword>
<keyword id="KW-1133">Transmembrane helix</keyword>
<keyword id="KW-0813">Transport</keyword>
<protein>
    <recommendedName>
        <fullName evidence="1">ATP synthase subunit a</fullName>
    </recommendedName>
    <alternativeName>
        <fullName evidence="1">ATP synthase F0 sector subunit a</fullName>
    </alternativeName>
    <alternativeName>
        <fullName evidence="1">F-ATPase subunit 6</fullName>
    </alternativeName>
</protein>
<name>ATP6_PELUB</name>
<comment type="function">
    <text evidence="1">Key component of the proton channel; it plays a direct role in the translocation of protons across the membrane.</text>
</comment>
<comment type="subunit">
    <text evidence="1">F-type ATPases have 2 components, CF(1) - the catalytic core - and CF(0) - the membrane proton channel. CF(1) has five subunits: alpha(3), beta(3), gamma(1), delta(1), epsilon(1). CF(0) has three main subunits: a(1), b(2) and c(9-12). The alpha and beta chains form an alternating ring which encloses part of the gamma chain. CF(1) is attached to CF(0) by a central stalk formed by the gamma and epsilon chains, while a peripheral stalk is formed by the delta and b chains.</text>
</comment>
<comment type="subcellular location">
    <subcellularLocation>
        <location evidence="1">Cell inner membrane</location>
        <topology evidence="1">Multi-pass membrane protein</topology>
    </subcellularLocation>
</comment>
<comment type="similarity">
    <text evidence="1">Belongs to the ATPase A chain family.</text>
</comment>
<reference key="1">
    <citation type="journal article" date="2005" name="Science">
        <title>Genome streamlining in a cosmopolitan oceanic bacterium.</title>
        <authorList>
            <person name="Giovannoni S.J."/>
            <person name="Tripp H.J."/>
            <person name="Givan S."/>
            <person name="Podar M."/>
            <person name="Vergin K.L."/>
            <person name="Baptista D."/>
            <person name="Bibbs L."/>
            <person name="Eads J."/>
            <person name="Richardson T.H."/>
            <person name="Noordewier M."/>
            <person name="Rappe M.S."/>
            <person name="Short J.M."/>
            <person name="Carrington J.C."/>
            <person name="Mathur E.J."/>
        </authorList>
    </citation>
    <scope>NUCLEOTIDE SEQUENCE [LARGE SCALE GENOMIC DNA]</scope>
    <source>
        <strain>HTCC1062</strain>
    </source>
</reference>
<sequence>MATNPMNQFEVYRIGPEIKLGAIDISFTNASLFMVISSLAILLIFNLGSKKNSLLPSKMQLLSELSYTFVSKMISDTAGSKAKPYFAFIFSIFMFVLFCNMFGMIPYAFTVTSHIIVTFILASFIFVGVTIIGFMKHGLGYLKLFVPSGVPAVLLPLIVVIEIISYLSRPVSLSVRLFANMMAGHTMMKVFGGFVISLGIVGGWLPLSFSVALTGLEILVAFLQAYVFAILTCIYLNDALNLHH</sequence>
<organism>
    <name type="scientific">Pelagibacter ubique (strain HTCC1062)</name>
    <dbReference type="NCBI Taxonomy" id="335992"/>
    <lineage>
        <taxon>Bacteria</taxon>
        <taxon>Pseudomonadati</taxon>
        <taxon>Pseudomonadota</taxon>
        <taxon>Alphaproteobacteria</taxon>
        <taxon>Candidatus Pelagibacterales</taxon>
        <taxon>Candidatus Pelagibacteraceae</taxon>
        <taxon>Candidatus Pelagibacter</taxon>
    </lineage>
</organism>
<proteinExistence type="inferred from homology"/>
<feature type="chain" id="PRO_0000362364" description="ATP synthase subunit a">
    <location>
        <begin position="1"/>
        <end position="244"/>
    </location>
</feature>
<feature type="transmembrane region" description="Helical" evidence="1">
    <location>
        <begin position="25"/>
        <end position="45"/>
    </location>
</feature>
<feature type="transmembrane region" description="Helical" evidence="1">
    <location>
        <begin position="85"/>
        <end position="105"/>
    </location>
</feature>
<feature type="transmembrane region" description="Helical" evidence="1">
    <location>
        <begin position="115"/>
        <end position="135"/>
    </location>
</feature>
<feature type="transmembrane region" description="Helical" evidence="1">
    <location>
        <begin position="144"/>
        <end position="164"/>
    </location>
</feature>
<feature type="transmembrane region" description="Helical" evidence="1">
    <location>
        <begin position="193"/>
        <end position="213"/>
    </location>
</feature>
<feature type="transmembrane region" description="Helical" evidence="1">
    <location>
        <begin position="216"/>
        <end position="236"/>
    </location>
</feature>
<dbReference type="EMBL" id="CP000084">
    <property type="protein sequence ID" value="AAZ20940.1"/>
    <property type="molecule type" value="Genomic_DNA"/>
</dbReference>
<dbReference type="RefSeq" id="WP_006997792.1">
    <property type="nucleotide sequence ID" value="NC_007205.1"/>
</dbReference>
<dbReference type="SMR" id="Q4FPE9"/>
<dbReference type="STRING" id="335992.SAR11_0116"/>
<dbReference type="GeneID" id="66294619"/>
<dbReference type="KEGG" id="pub:SAR11_0116"/>
<dbReference type="eggNOG" id="COG0356">
    <property type="taxonomic scope" value="Bacteria"/>
</dbReference>
<dbReference type="HOGENOM" id="CLU_041018_0_2_5"/>
<dbReference type="OrthoDB" id="9809130at2"/>
<dbReference type="Proteomes" id="UP000002528">
    <property type="component" value="Chromosome"/>
</dbReference>
<dbReference type="GO" id="GO:0005886">
    <property type="term" value="C:plasma membrane"/>
    <property type="evidence" value="ECO:0007669"/>
    <property type="project" value="UniProtKB-SubCell"/>
</dbReference>
<dbReference type="GO" id="GO:0045259">
    <property type="term" value="C:proton-transporting ATP synthase complex"/>
    <property type="evidence" value="ECO:0007669"/>
    <property type="project" value="UniProtKB-KW"/>
</dbReference>
<dbReference type="GO" id="GO:0046933">
    <property type="term" value="F:proton-transporting ATP synthase activity, rotational mechanism"/>
    <property type="evidence" value="ECO:0007669"/>
    <property type="project" value="UniProtKB-UniRule"/>
</dbReference>
<dbReference type="CDD" id="cd00310">
    <property type="entry name" value="ATP-synt_Fo_a_6"/>
    <property type="match status" value="1"/>
</dbReference>
<dbReference type="FunFam" id="1.20.120.220:FF:000003">
    <property type="entry name" value="ATP synthase subunit a"/>
    <property type="match status" value="1"/>
</dbReference>
<dbReference type="Gene3D" id="1.20.120.220">
    <property type="entry name" value="ATP synthase, F0 complex, subunit A"/>
    <property type="match status" value="1"/>
</dbReference>
<dbReference type="HAMAP" id="MF_01393">
    <property type="entry name" value="ATP_synth_a_bact"/>
    <property type="match status" value="1"/>
</dbReference>
<dbReference type="InterPro" id="IPR000568">
    <property type="entry name" value="ATP_synth_F0_asu"/>
</dbReference>
<dbReference type="InterPro" id="IPR023011">
    <property type="entry name" value="ATP_synth_F0_asu_AS"/>
</dbReference>
<dbReference type="InterPro" id="IPR045083">
    <property type="entry name" value="ATP_synth_F0_asu_bact/mt"/>
</dbReference>
<dbReference type="InterPro" id="IPR035908">
    <property type="entry name" value="F0_ATP_A_sf"/>
</dbReference>
<dbReference type="NCBIfam" id="TIGR01131">
    <property type="entry name" value="ATP_synt_6_or_A"/>
    <property type="match status" value="1"/>
</dbReference>
<dbReference type="NCBIfam" id="NF004482">
    <property type="entry name" value="PRK05815.2-4"/>
    <property type="match status" value="1"/>
</dbReference>
<dbReference type="PANTHER" id="PTHR11410">
    <property type="entry name" value="ATP SYNTHASE SUBUNIT A"/>
    <property type="match status" value="1"/>
</dbReference>
<dbReference type="PANTHER" id="PTHR11410:SF0">
    <property type="entry name" value="ATP SYNTHASE SUBUNIT A"/>
    <property type="match status" value="1"/>
</dbReference>
<dbReference type="Pfam" id="PF00119">
    <property type="entry name" value="ATP-synt_A"/>
    <property type="match status" value="1"/>
</dbReference>
<dbReference type="PRINTS" id="PR00123">
    <property type="entry name" value="ATPASEA"/>
</dbReference>
<dbReference type="SUPFAM" id="SSF81336">
    <property type="entry name" value="F1F0 ATP synthase subunit A"/>
    <property type="match status" value="1"/>
</dbReference>
<dbReference type="PROSITE" id="PS00449">
    <property type="entry name" value="ATPASE_A"/>
    <property type="match status" value="1"/>
</dbReference>
<evidence type="ECO:0000255" key="1">
    <source>
        <dbReference type="HAMAP-Rule" id="MF_01393"/>
    </source>
</evidence>